<feature type="chain" id="PRO_0000038145" description="Small delta antigen">
    <location>
        <begin position="1"/>
        <end position="195"/>
    </location>
</feature>
<feature type="domain" description="HDAg" evidence="4">
    <location>
        <begin position="21"/>
        <end position="195"/>
    </location>
</feature>
<feature type="region of interest" description="Dimerization" evidence="3">
    <location>
        <begin position="13"/>
        <end position="60"/>
    </location>
</feature>
<feature type="region of interest" description="Disordered" evidence="5">
    <location>
        <begin position="58"/>
        <end position="195"/>
    </location>
</feature>
<feature type="region of interest" description="RNA-binding" evidence="4">
    <location>
        <begin position="97"/>
        <end position="107"/>
    </location>
</feature>
<feature type="region of interest" description="RNAPII-binding" evidence="4">
    <location>
        <begin position="130"/>
        <end position="195"/>
    </location>
</feature>
<feature type="region of interest" description="RNA-binding" evidence="4">
    <location>
        <begin position="136"/>
        <end position="146"/>
    </location>
</feature>
<feature type="short sequence motif" description="Nuclear localization signal" evidence="2">
    <location>
        <begin position="66"/>
        <end position="75"/>
    </location>
</feature>
<feature type="compositionally biased region" description="Basic and acidic residues" evidence="5">
    <location>
        <begin position="93"/>
        <end position="112"/>
    </location>
</feature>
<feature type="compositionally biased region" description="Gly residues" evidence="5">
    <location>
        <begin position="158"/>
        <end position="167"/>
    </location>
</feature>
<feature type="modified residue" description="Phosphoserine; by host CK2" evidence="2">
    <location>
        <position position="2"/>
    </location>
</feature>
<feature type="modified residue" description="Omega-N-methylated arginine; by host PRMT1" evidence="2">
    <location>
        <position position="14"/>
    </location>
</feature>
<feature type="modified residue" description="N6-acetyllysine; by host" evidence="2">
    <location>
        <position position="72"/>
    </location>
</feature>
<feature type="modified residue" description="Phosphoserine; by host" evidence="2">
    <location>
        <position position="123"/>
    </location>
</feature>
<feature type="modified residue" description="Phosphoserine; by host MAPK1 and MAPK3" evidence="2">
    <location>
        <position position="177"/>
    </location>
</feature>
<feature type="modified residue" description="Phosphothreonine; by host" evidence="2">
    <location>
        <position position="182"/>
    </location>
</feature>
<keyword id="KW-0007">Acetylation</keyword>
<keyword id="KW-1048">Host nucleus</keyword>
<keyword id="KW-0945">Host-virus interaction</keyword>
<keyword id="KW-0488">Methylation</keyword>
<keyword id="KW-0597">Phosphoprotein</keyword>
<keyword id="KW-0691">RNA editing</keyword>
<keyword id="KW-0694">RNA-binding</keyword>
<keyword id="KW-1163">Viral penetration into host nucleus</keyword>
<keyword id="KW-0946">Virion</keyword>
<keyword id="KW-1160">Virus entry into host cell</keyword>
<evidence type="ECO:0000250" key="1"/>
<evidence type="ECO:0000250" key="2">
    <source>
        <dbReference type="UniProtKB" id="P0C6L3"/>
    </source>
</evidence>
<evidence type="ECO:0000255" key="3"/>
<evidence type="ECO:0000255" key="4">
    <source>
        <dbReference type="PROSITE-ProRule" id="PRU01183"/>
    </source>
</evidence>
<evidence type="ECO:0000256" key="5">
    <source>
        <dbReference type="SAM" id="MobiDB-lite"/>
    </source>
</evidence>
<evidence type="ECO:0000305" key="6"/>
<comment type="function">
    <text evidence="1">Promotes both transcription and replication of genomic RNA. Following virus entry into host cell, provides nuclear import of HDV RNPs thanks to its nuclear localization signal. May interact with host RNA polymerase II thereby changing its template requirement from DNA to RNA. RNA pol II complex would then acts as an RNA-directed RNA polymerase, and transcribe and replicate HDV genome (By similarity).</text>
</comment>
<comment type="subunit">
    <text evidence="1">Homodimer. Homooctamer. Interacts with host RNA polymerase II complex, and with host NPM1.</text>
</comment>
<comment type="subcellular location">
    <subcellularLocation>
        <location>Virion</location>
    </subcellularLocation>
    <subcellularLocation>
        <location evidence="1">Host nucleus</location>
    </subcellularLocation>
</comment>
<comment type="PTM">
    <text evidence="1">Phosphorylated at serines and threonines by host MAPK1/3, PKR, and CK2.</text>
</comment>
<comment type="PTM">
    <text evidence="1">Acetylation modulates nuclear localization. Neo-synthesized genomic RNA migrates from the nucleus to the cytoplasm, where they interact with S-HDAg, which once acetylated redirect both partners to the nucleus (By similarity).</text>
</comment>
<comment type="PTM">
    <text evidence="1">Methylation plays a role in viral genome replication.</text>
</comment>
<comment type="RNA editing">
    <location>
        <position position="196" evidence="1"/>
    </location>
    <text evidence="1">Partially edited. RNA editing at this position occurs on the antigenomic strand and consists of a conversion of A to G catalyzed by the cellular enzyme ADAR1. The unedited RNA version gives rise to the small delta antigen, which ends with a nonsense codon at position 196. In the edited version, this amber codon is modified to a tryptophan codon and gives rise to the large delta antigen protein (AC P0C6L9). S-HDAg suppresses editing of non-replicating antigenomic RNA, thereby regulating the extent of editing (By similarity).</text>
</comment>
<comment type="miscellaneous">
    <text>This strain belongs to the genotype II found only in East Asia.</text>
</comment>
<comment type="similarity">
    <text evidence="6">Belongs to the hepatitis delta antigen family.</text>
</comment>
<protein>
    <recommendedName>
        <fullName>Small delta antigen</fullName>
        <shortName>S-HDAg</shortName>
    </recommendedName>
    <alternativeName>
        <fullName>p24</fullName>
    </alternativeName>
</protein>
<reference key="1">
    <citation type="journal article" date="1990" name="J. Virol.">
        <title>Heterogeneity and evolution rates of delta virus RNA sequences.</title>
        <authorList>
            <person name="Imazeki F."/>
            <person name="Omata M."/>
            <person name="Ohto M."/>
        </authorList>
    </citation>
    <scope>NUCLEOTIDE SEQUENCE [GENOMIC RNA]</scope>
</reference>
<reference key="2">
    <citation type="journal article" date="2005" name="Acta Virol.">
        <title>Hepatitis D.</title>
        <authorList>
            <person name="Husa P."/>
            <person name="Linhartova A."/>
            <person name="Nemecek V."/>
            <person name="Husova L."/>
        </authorList>
    </citation>
    <scope>REVIEW</scope>
</reference>
<reference key="3">
    <citation type="journal article" date="2006" name="Curr. Top. Microbiol. Immunol.">
        <title>Post-translational modification of delta antigen of hepatitis D virus.</title>
        <authorList>
            <person name="Huang W.H."/>
            <person name="Chen C.W."/>
            <person name="Wu H.L."/>
            <person name="Chen P.J."/>
        </authorList>
    </citation>
    <scope>REVIEW</scope>
</reference>
<dbReference type="EMBL" id="D90192">
    <property type="protein sequence ID" value="BAA14216.1"/>
    <property type="molecule type" value="Genomic_RNA"/>
</dbReference>
<dbReference type="PIR" id="B36409">
    <property type="entry name" value="SAVLDS"/>
</dbReference>
<dbReference type="SMR" id="P69619"/>
<dbReference type="Proteomes" id="UP000008111">
    <property type="component" value="Genome"/>
</dbReference>
<dbReference type="GO" id="GO:0043657">
    <property type="term" value="C:host cell"/>
    <property type="evidence" value="ECO:0007669"/>
    <property type="project" value="GOC"/>
</dbReference>
<dbReference type="GO" id="GO:0042025">
    <property type="term" value="C:host cell nucleus"/>
    <property type="evidence" value="ECO:0007669"/>
    <property type="project" value="UniProtKB-SubCell"/>
</dbReference>
<dbReference type="GO" id="GO:0044423">
    <property type="term" value="C:virion component"/>
    <property type="evidence" value="ECO:0007669"/>
    <property type="project" value="UniProtKB-KW"/>
</dbReference>
<dbReference type="GO" id="GO:0003723">
    <property type="term" value="F:RNA binding"/>
    <property type="evidence" value="ECO:0007669"/>
    <property type="project" value="UniProtKB-KW"/>
</dbReference>
<dbReference type="GO" id="GO:0046718">
    <property type="term" value="P:symbiont entry into host cell"/>
    <property type="evidence" value="ECO:0007669"/>
    <property type="project" value="UniProtKB-KW"/>
</dbReference>
<dbReference type="GO" id="GO:0075732">
    <property type="term" value="P:viral penetration into host nucleus"/>
    <property type="evidence" value="ECO:0007669"/>
    <property type="project" value="UniProtKB-KW"/>
</dbReference>
<dbReference type="Gene3D" id="4.10.220.40">
    <property type="entry name" value="Delta antigen, N-terminal"/>
    <property type="match status" value="1"/>
</dbReference>
<dbReference type="InterPro" id="IPR027403">
    <property type="entry name" value="Delta_antigen_N"/>
</dbReference>
<dbReference type="InterPro" id="IPR037517">
    <property type="entry name" value="HDAG_dom"/>
</dbReference>
<dbReference type="InterPro" id="IPR002506">
    <property type="entry name" value="HDV_ag"/>
</dbReference>
<dbReference type="Pfam" id="PF01517">
    <property type="entry name" value="HDV_ag"/>
    <property type="match status" value="1"/>
</dbReference>
<dbReference type="SUPFAM" id="SSF58108">
    <property type="entry name" value="Oligomerization domain of hepatitis delta antigen"/>
    <property type="match status" value="1"/>
</dbReference>
<dbReference type="PROSITE" id="PS51838">
    <property type="entry name" value="HDAG"/>
    <property type="match status" value="1"/>
</dbReference>
<proteinExistence type="inferred from homology"/>
<organism>
    <name type="scientific">Hepatitis delta virus genotype II (isolate Japanese S-1)</name>
    <name type="common">HDV</name>
    <dbReference type="NCBI Taxonomy" id="10427"/>
    <lineage>
        <taxon>Viruses</taxon>
        <taxon>Ribozyviria</taxon>
        <taxon>Kolmioviridae</taxon>
        <taxon>Deltavirus</taxon>
        <taxon>Hepatitis delta virus</taxon>
    </lineage>
</organism>
<sequence length="195" mass="21928">MSQSETRRGRRGTREETLEKWITARKKAEELEKDLRKTRKTIKKLEEENPWLGNIVGIIRKGKDGEGAPPAKRPRTDQMEVDSGPGKRPHKSGFTDKEREDHRRRKALENKKKQLSAGGKILSKEEEEELRRLTDEDEERKRRVAGPRVGDVNPSRGGPRGAPGGGFVPQMAGVPESPFSRTGEGLDIRGTQGFP</sequence>
<accession>P69619</accession>
<accession>P25883</accession>
<organismHost>
    <name type="scientific">Homo sapiens</name>
    <name type="common">Human</name>
    <dbReference type="NCBI Taxonomy" id="9606"/>
</organismHost>
<name>SHDAG_HDVS1</name>